<protein>
    <recommendedName>
        <fullName>Urotensin-2</fullName>
    </recommendedName>
    <alternativeName>
        <fullName>Urotensin II</fullName>
        <shortName>U-II</shortName>
        <shortName>UII</shortName>
    </alternativeName>
</protein>
<proteinExistence type="evidence at protein level"/>
<gene>
    <name type="primary">UTS2</name>
    <name type="ORF">UNQ525/PRO1068</name>
</gene>
<name>UTS2_HUMAN</name>
<keyword id="KW-0002">3D-structure</keyword>
<keyword id="KW-0025">Alternative splicing</keyword>
<keyword id="KW-0165">Cleavage on pair of basic residues</keyword>
<keyword id="KW-0903">Direct protein sequencing</keyword>
<keyword id="KW-1015">Disulfide bond</keyword>
<keyword id="KW-0372">Hormone</keyword>
<keyword id="KW-1267">Proteomics identification</keyword>
<keyword id="KW-1185">Reference proteome</keyword>
<keyword id="KW-0964">Secreted</keyword>
<keyword id="KW-0732">Signal</keyword>
<accession>O95399</accession>
<accession>Q5H8X7</accession>
<accession>Q6UXF6</accession>
<accession>Q9UKP7</accession>
<feature type="signal peptide">
    <location>
        <begin position="1"/>
        <end position="20"/>
    </location>
</feature>
<feature type="propeptide" id="PRO_0000036346">
    <location>
        <begin position="21"/>
        <end position="110"/>
    </location>
</feature>
<feature type="peptide" id="PRO_0000036347" description="Urotensin-2">
    <location>
        <begin position="114"/>
        <end position="124"/>
    </location>
</feature>
<feature type="disulfide bond" evidence="1">
    <location>
        <begin position="118"/>
        <end position="123"/>
    </location>
</feature>
<feature type="splice variant" id="VSP_013638" description="In isoform 2." evidence="3">
    <original>MYKLASCCLLFIGFLNPLLSLPLLDSR</original>
    <variation>METNVFHLMLCVTSARTHKSTSLCFGHFNSYPSLPLIHDLLL</variation>
    <location>
        <begin position="1"/>
        <end position="27"/>
    </location>
</feature>
<feature type="sequence variant" id="VAR_053734" description="In dbSNP:rs34305100." evidence="2">
    <original>I</original>
    <variation>T</variation>
    <location>
        <position position="12"/>
    </location>
</feature>
<feature type="sequence variant" id="VAR_029313" description="In dbSNP:rs2890565.">
    <original>S</original>
    <variation>N</variation>
    <location>
        <position position="74"/>
    </location>
</feature>
<dbReference type="EMBL" id="AF104118">
    <property type="protein sequence ID" value="AAD13070.1"/>
    <property type="molecule type" value="mRNA"/>
</dbReference>
<dbReference type="EMBL" id="AF140630">
    <property type="protein sequence ID" value="AAD55577.1"/>
    <property type="molecule type" value="mRNA"/>
</dbReference>
<dbReference type="EMBL" id="AY358375">
    <property type="protein sequence ID" value="AAQ88741.1"/>
    <property type="molecule type" value="mRNA"/>
</dbReference>
<dbReference type="EMBL" id="Z98884">
    <property type="status" value="NOT_ANNOTATED_CDS"/>
    <property type="molecule type" value="Genomic_DNA"/>
</dbReference>
<dbReference type="CCDS" id="CCDS90.1">
    <molecule id="O95399-2"/>
</dbReference>
<dbReference type="CCDS" id="CCDS91.1">
    <molecule id="O95399-1"/>
</dbReference>
<dbReference type="RefSeq" id="NP_006777.1">
    <molecule id="O95399-1"/>
    <property type="nucleotide sequence ID" value="NM_006786.4"/>
</dbReference>
<dbReference type="RefSeq" id="NP_068835.1">
    <molecule id="O95399-2"/>
    <property type="nucleotide sequence ID" value="NM_021995.2"/>
</dbReference>
<dbReference type="RefSeq" id="XP_011538839.1">
    <molecule id="O95399-2"/>
    <property type="nucleotide sequence ID" value="XM_011540537.3"/>
</dbReference>
<dbReference type="RefSeq" id="XP_011538840.1">
    <molecule id="O95399-1"/>
    <property type="nucleotide sequence ID" value="XM_011540538.2"/>
</dbReference>
<dbReference type="PDB" id="6HVB">
    <property type="method" value="NMR"/>
    <property type="chains" value="A=117-124"/>
</dbReference>
<dbReference type="PDB" id="6HVC">
    <property type="method" value="NMR"/>
    <property type="chains" value="A=117-124"/>
</dbReference>
<dbReference type="PDBsum" id="6HVB"/>
<dbReference type="PDBsum" id="6HVC"/>
<dbReference type="SMR" id="O95399"/>
<dbReference type="BioGRID" id="116116">
    <property type="interactions" value="15"/>
</dbReference>
<dbReference type="FunCoup" id="O95399">
    <property type="interactions" value="528"/>
</dbReference>
<dbReference type="IntAct" id="O95399">
    <property type="interactions" value="4"/>
</dbReference>
<dbReference type="STRING" id="9606.ENSP00000054668"/>
<dbReference type="BindingDB" id="O95399"/>
<dbReference type="GlyGen" id="O95399">
    <property type="glycosylation" value="1 site, 1 O-linked glycan (1 site)"/>
</dbReference>
<dbReference type="BioMuta" id="UTS2"/>
<dbReference type="jPOST" id="O95399"/>
<dbReference type="MassIVE" id="O95399"/>
<dbReference type="PeptideAtlas" id="O95399"/>
<dbReference type="ProteomicsDB" id="50851">
    <molecule id="O95399-1"/>
</dbReference>
<dbReference type="ProteomicsDB" id="50852">
    <molecule id="O95399-2"/>
</dbReference>
<dbReference type="Pumba" id="O95399"/>
<dbReference type="Antibodypedia" id="1351">
    <property type="antibodies" value="253 antibodies from 26 providers"/>
</dbReference>
<dbReference type="DNASU" id="10911"/>
<dbReference type="Ensembl" id="ENST00000054668.5">
    <molecule id="O95399-2"/>
    <property type="protein sequence ID" value="ENSP00000054668.5"/>
    <property type="gene ID" value="ENSG00000049247.14"/>
</dbReference>
<dbReference type="Ensembl" id="ENST00000361696.10">
    <molecule id="O95399-1"/>
    <property type="protein sequence ID" value="ENSP00000355163.5"/>
    <property type="gene ID" value="ENSG00000049247.14"/>
</dbReference>
<dbReference type="GeneID" id="10911"/>
<dbReference type="KEGG" id="hsa:10911"/>
<dbReference type="MANE-Select" id="ENST00000361696.10">
    <property type="protein sequence ID" value="ENSP00000355163.5"/>
    <property type="RefSeq nucleotide sequence ID" value="NM_006786.4"/>
    <property type="RefSeq protein sequence ID" value="NP_006777.1"/>
</dbReference>
<dbReference type="UCSC" id="uc001aor.4">
    <molecule id="O95399-1"/>
    <property type="organism name" value="human"/>
</dbReference>
<dbReference type="AGR" id="HGNC:12636"/>
<dbReference type="CTD" id="10911"/>
<dbReference type="DisGeNET" id="10911"/>
<dbReference type="GeneCards" id="UTS2"/>
<dbReference type="HGNC" id="HGNC:12636">
    <property type="gene designation" value="UTS2"/>
</dbReference>
<dbReference type="HPA" id="ENSG00000049247">
    <property type="expression patterns" value="Tissue enhanced (adrenal gland, brain)"/>
</dbReference>
<dbReference type="MIM" id="604097">
    <property type="type" value="gene"/>
</dbReference>
<dbReference type="neXtProt" id="NX_O95399"/>
<dbReference type="OpenTargets" id="ENSG00000049247"/>
<dbReference type="PharmGKB" id="PA37261"/>
<dbReference type="VEuPathDB" id="HostDB:ENSG00000049247"/>
<dbReference type="GeneTree" id="ENSGT00510000049583"/>
<dbReference type="HOGENOM" id="CLU_156959_0_0_1"/>
<dbReference type="InParanoid" id="O95399"/>
<dbReference type="OMA" id="ETFYGNH"/>
<dbReference type="OrthoDB" id="8894951at2759"/>
<dbReference type="PAN-GO" id="O95399">
    <property type="GO annotations" value="2 GO annotations based on evolutionary models"/>
</dbReference>
<dbReference type="PhylomeDB" id="O95399"/>
<dbReference type="TreeFam" id="TF330799"/>
<dbReference type="PathwayCommons" id="O95399"/>
<dbReference type="Reactome" id="R-HSA-375276">
    <property type="pathway name" value="Peptide ligand-binding receptors"/>
</dbReference>
<dbReference type="Reactome" id="R-HSA-416476">
    <property type="pathway name" value="G alpha (q) signalling events"/>
</dbReference>
<dbReference type="SignaLink" id="O95399"/>
<dbReference type="BioGRID-ORCS" id="10911">
    <property type="hits" value="19 hits in 1143 CRISPR screens"/>
</dbReference>
<dbReference type="ChiTaRS" id="UTS2">
    <property type="organism name" value="human"/>
</dbReference>
<dbReference type="GeneWiki" id="UTS2"/>
<dbReference type="GenomeRNAi" id="10911"/>
<dbReference type="Pharos" id="O95399">
    <property type="development level" value="Tbio"/>
</dbReference>
<dbReference type="PRO" id="PR:O95399"/>
<dbReference type="Proteomes" id="UP000005640">
    <property type="component" value="Chromosome 1"/>
</dbReference>
<dbReference type="RNAct" id="O95399">
    <property type="molecule type" value="protein"/>
</dbReference>
<dbReference type="Bgee" id="ENSG00000049247">
    <property type="expression patterns" value="Expressed in male germ line stem cell (sensu Vertebrata) in testis and 125 other cell types or tissues"/>
</dbReference>
<dbReference type="ExpressionAtlas" id="O95399">
    <property type="expression patterns" value="baseline and differential"/>
</dbReference>
<dbReference type="GO" id="GO:0005576">
    <property type="term" value="C:extracellular region"/>
    <property type="evidence" value="ECO:0000304"/>
    <property type="project" value="Reactome"/>
</dbReference>
<dbReference type="GO" id="GO:0005615">
    <property type="term" value="C:extracellular space"/>
    <property type="evidence" value="ECO:0000318"/>
    <property type="project" value="GO_Central"/>
</dbReference>
<dbReference type="GO" id="GO:0045202">
    <property type="term" value="C:synapse"/>
    <property type="evidence" value="ECO:0007669"/>
    <property type="project" value="GOC"/>
</dbReference>
<dbReference type="GO" id="GO:0005179">
    <property type="term" value="F:hormone activity"/>
    <property type="evidence" value="ECO:0000304"/>
    <property type="project" value="ProtInc"/>
</dbReference>
<dbReference type="GO" id="GO:0005102">
    <property type="term" value="F:signaling receptor binding"/>
    <property type="evidence" value="ECO:0000304"/>
    <property type="project" value="ProtInc"/>
</dbReference>
<dbReference type="GO" id="GO:0097746">
    <property type="term" value="P:blood vessel diameter maintenance"/>
    <property type="evidence" value="ECO:0007669"/>
    <property type="project" value="InterPro"/>
</dbReference>
<dbReference type="GO" id="GO:0007268">
    <property type="term" value="P:chemical synaptic transmission"/>
    <property type="evidence" value="ECO:0000304"/>
    <property type="project" value="ProtInc"/>
</dbReference>
<dbReference type="GO" id="GO:0006936">
    <property type="term" value="P:muscle contraction"/>
    <property type="evidence" value="ECO:0000304"/>
    <property type="project" value="ProtInc"/>
</dbReference>
<dbReference type="GO" id="GO:0008217">
    <property type="term" value="P:regulation of blood pressure"/>
    <property type="evidence" value="ECO:0000318"/>
    <property type="project" value="GO_Central"/>
</dbReference>
<dbReference type="InterPro" id="IPR001483">
    <property type="entry name" value="Urotensin_II"/>
</dbReference>
<dbReference type="PANTHER" id="PTHR14447">
    <property type="entry name" value="UROTENSIN 2"/>
    <property type="match status" value="1"/>
</dbReference>
<dbReference type="PANTHER" id="PTHR14447:SF0">
    <property type="entry name" value="UROTENSIN-2"/>
    <property type="match status" value="1"/>
</dbReference>
<dbReference type="Pfam" id="PF02083">
    <property type="entry name" value="Urotensin_II"/>
    <property type="match status" value="1"/>
</dbReference>
<dbReference type="PROSITE" id="PS00984">
    <property type="entry name" value="UROTENSIN_II"/>
    <property type="match status" value="1"/>
</dbReference>
<reference key="1">
    <citation type="journal article" date="1998" name="Proc. Natl. Acad. Sci. U.S.A.">
        <title>Cloning of the cDNA encoding the urotensin II precursor in frog and human reveals intense expression of the urotensin II gene in motoneurons of the spinal cord.</title>
        <authorList>
            <person name="Coulouarn Y."/>
            <person name="Lihrmann I."/>
            <person name="Jegou S."/>
            <person name="Anouar Y."/>
            <person name="Tostivint H."/>
            <person name="Beauvillain J.-C."/>
            <person name="Conlon J.M."/>
            <person name="Bern H.A."/>
            <person name="Vaudry H."/>
        </authorList>
    </citation>
    <scope>NUCLEOTIDE SEQUENCE [MRNA] (ISOFORM 1)</scope>
    <source>
        <tissue>Spinal cord</tissue>
    </source>
</reference>
<reference key="2">
    <citation type="journal article" date="1999" name="Nature">
        <title>Human urotensin-II is a potent vasoconstrictor and agonist for the orphan receptor GPR14.</title>
        <authorList>
            <person name="Ames R.S."/>
            <person name="Sarau H.M."/>
            <person name="Chambers J.K."/>
            <person name="Willette R.N."/>
            <person name="Aiyar N.V."/>
            <person name="Romanic A.M."/>
            <person name="Louden C.S."/>
            <person name="Foley J.J."/>
            <person name="Sauermelch C.F."/>
            <person name="Coatney R.W."/>
            <person name="Ao Z."/>
            <person name="Disa J."/>
            <person name="Holmes S.D."/>
            <person name="Stadel J.M."/>
            <person name="Martin J.D."/>
            <person name="Liu W.-S."/>
            <person name="Glover G.I."/>
            <person name="Wilson S."/>
            <person name="McNulty D.E."/>
            <person name="Ellis C.E."/>
            <person name="Elshourbagy N.A."/>
            <person name="Shabon U."/>
            <person name="Trill J.J."/>
            <person name="Hay D.W.P."/>
            <person name="Ohlstein E.H."/>
            <person name="Bergsma D.J."/>
            <person name="Douglas S.A."/>
        </authorList>
    </citation>
    <scope>NUCLEOTIDE SEQUENCE [MRNA] (ISOFORM 2)</scope>
</reference>
<reference key="3">
    <citation type="journal article" date="2003" name="Genome Res.">
        <title>The secreted protein discovery initiative (SPDI), a large-scale effort to identify novel human secreted and transmembrane proteins: a bioinformatics assessment.</title>
        <authorList>
            <person name="Clark H.F."/>
            <person name="Gurney A.L."/>
            <person name="Abaya E."/>
            <person name="Baker K."/>
            <person name="Baldwin D.T."/>
            <person name="Brush J."/>
            <person name="Chen J."/>
            <person name="Chow B."/>
            <person name="Chui C."/>
            <person name="Crowley C."/>
            <person name="Currell B."/>
            <person name="Deuel B."/>
            <person name="Dowd P."/>
            <person name="Eaton D."/>
            <person name="Foster J.S."/>
            <person name="Grimaldi C."/>
            <person name="Gu Q."/>
            <person name="Hass P.E."/>
            <person name="Heldens S."/>
            <person name="Huang A."/>
            <person name="Kim H.S."/>
            <person name="Klimowski L."/>
            <person name="Jin Y."/>
            <person name="Johnson S."/>
            <person name="Lee J."/>
            <person name="Lewis L."/>
            <person name="Liao D."/>
            <person name="Mark M.R."/>
            <person name="Robbie E."/>
            <person name="Sanchez C."/>
            <person name="Schoenfeld J."/>
            <person name="Seshagiri S."/>
            <person name="Simmons L."/>
            <person name="Singh J."/>
            <person name="Smith V."/>
            <person name="Stinson J."/>
            <person name="Vagts A."/>
            <person name="Vandlen R.L."/>
            <person name="Watanabe C."/>
            <person name="Wieand D."/>
            <person name="Woods K."/>
            <person name="Xie M.-H."/>
            <person name="Yansura D.G."/>
            <person name="Yi S."/>
            <person name="Yu G."/>
            <person name="Yuan J."/>
            <person name="Zhang M."/>
            <person name="Zhang Z."/>
            <person name="Goddard A.D."/>
            <person name="Wood W.I."/>
            <person name="Godowski P.J."/>
            <person name="Gray A.M."/>
        </authorList>
    </citation>
    <scope>NUCLEOTIDE SEQUENCE [LARGE SCALE MRNA] (ISOFORM 1)</scope>
    <scope>VARIANT THR-12</scope>
</reference>
<reference key="4">
    <citation type="journal article" date="2006" name="Nature">
        <title>The DNA sequence and biological annotation of human chromosome 1.</title>
        <authorList>
            <person name="Gregory S.G."/>
            <person name="Barlow K.F."/>
            <person name="McLay K.E."/>
            <person name="Kaul R."/>
            <person name="Swarbreck D."/>
            <person name="Dunham A."/>
            <person name="Scott C.E."/>
            <person name="Howe K.L."/>
            <person name="Woodfine K."/>
            <person name="Spencer C.C.A."/>
            <person name="Jones M.C."/>
            <person name="Gillson C."/>
            <person name="Searle S."/>
            <person name="Zhou Y."/>
            <person name="Kokocinski F."/>
            <person name="McDonald L."/>
            <person name="Evans R."/>
            <person name="Phillips K."/>
            <person name="Atkinson A."/>
            <person name="Cooper R."/>
            <person name="Jones C."/>
            <person name="Hall R.E."/>
            <person name="Andrews T.D."/>
            <person name="Lloyd C."/>
            <person name="Ainscough R."/>
            <person name="Almeida J.P."/>
            <person name="Ambrose K.D."/>
            <person name="Anderson F."/>
            <person name="Andrew R.W."/>
            <person name="Ashwell R.I.S."/>
            <person name="Aubin K."/>
            <person name="Babbage A.K."/>
            <person name="Bagguley C.L."/>
            <person name="Bailey J."/>
            <person name="Beasley H."/>
            <person name="Bethel G."/>
            <person name="Bird C.P."/>
            <person name="Bray-Allen S."/>
            <person name="Brown J.Y."/>
            <person name="Brown A.J."/>
            <person name="Buckley D."/>
            <person name="Burton J."/>
            <person name="Bye J."/>
            <person name="Carder C."/>
            <person name="Chapman J.C."/>
            <person name="Clark S.Y."/>
            <person name="Clarke G."/>
            <person name="Clee C."/>
            <person name="Cobley V."/>
            <person name="Collier R.E."/>
            <person name="Corby N."/>
            <person name="Coville G.J."/>
            <person name="Davies J."/>
            <person name="Deadman R."/>
            <person name="Dunn M."/>
            <person name="Earthrowl M."/>
            <person name="Ellington A.G."/>
            <person name="Errington H."/>
            <person name="Frankish A."/>
            <person name="Frankland J."/>
            <person name="French L."/>
            <person name="Garner P."/>
            <person name="Garnett J."/>
            <person name="Gay L."/>
            <person name="Ghori M.R.J."/>
            <person name="Gibson R."/>
            <person name="Gilby L.M."/>
            <person name="Gillett W."/>
            <person name="Glithero R.J."/>
            <person name="Grafham D.V."/>
            <person name="Griffiths C."/>
            <person name="Griffiths-Jones S."/>
            <person name="Grocock R."/>
            <person name="Hammond S."/>
            <person name="Harrison E.S.I."/>
            <person name="Hart E."/>
            <person name="Haugen E."/>
            <person name="Heath P.D."/>
            <person name="Holmes S."/>
            <person name="Holt K."/>
            <person name="Howden P.J."/>
            <person name="Hunt A.R."/>
            <person name="Hunt S.E."/>
            <person name="Hunter G."/>
            <person name="Isherwood J."/>
            <person name="James R."/>
            <person name="Johnson C."/>
            <person name="Johnson D."/>
            <person name="Joy A."/>
            <person name="Kay M."/>
            <person name="Kershaw J.K."/>
            <person name="Kibukawa M."/>
            <person name="Kimberley A.M."/>
            <person name="King A."/>
            <person name="Knights A.J."/>
            <person name="Lad H."/>
            <person name="Laird G."/>
            <person name="Lawlor S."/>
            <person name="Leongamornlert D.A."/>
            <person name="Lloyd D.M."/>
            <person name="Loveland J."/>
            <person name="Lovell J."/>
            <person name="Lush M.J."/>
            <person name="Lyne R."/>
            <person name="Martin S."/>
            <person name="Mashreghi-Mohammadi M."/>
            <person name="Matthews L."/>
            <person name="Matthews N.S.W."/>
            <person name="McLaren S."/>
            <person name="Milne S."/>
            <person name="Mistry S."/>
            <person name="Moore M.J.F."/>
            <person name="Nickerson T."/>
            <person name="O'Dell C.N."/>
            <person name="Oliver K."/>
            <person name="Palmeiri A."/>
            <person name="Palmer S.A."/>
            <person name="Parker A."/>
            <person name="Patel D."/>
            <person name="Pearce A.V."/>
            <person name="Peck A.I."/>
            <person name="Pelan S."/>
            <person name="Phelps K."/>
            <person name="Phillimore B.J."/>
            <person name="Plumb R."/>
            <person name="Rajan J."/>
            <person name="Raymond C."/>
            <person name="Rouse G."/>
            <person name="Saenphimmachak C."/>
            <person name="Sehra H.K."/>
            <person name="Sheridan E."/>
            <person name="Shownkeen R."/>
            <person name="Sims S."/>
            <person name="Skuce C.D."/>
            <person name="Smith M."/>
            <person name="Steward C."/>
            <person name="Subramanian S."/>
            <person name="Sycamore N."/>
            <person name="Tracey A."/>
            <person name="Tromans A."/>
            <person name="Van Helmond Z."/>
            <person name="Wall M."/>
            <person name="Wallis J.M."/>
            <person name="White S."/>
            <person name="Whitehead S.L."/>
            <person name="Wilkinson J.E."/>
            <person name="Willey D.L."/>
            <person name="Williams H."/>
            <person name="Wilming L."/>
            <person name="Wray P.W."/>
            <person name="Wu Z."/>
            <person name="Coulson A."/>
            <person name="Vaudin M."/>
            <person name="Sulston J.E."/>
            <person name="Durbin R.M."/>
            <person name="Hubbard T."/>
            <person name="Wooster R."/>
            <person name="Dunham I."/>
            <person name="Carter N.P."/>
            <person name="McVean G."/>
            <person name="Ross M.T."/>
            <person name="Harrow J."/>
            <person name="Olson M.V."/>
            <person name="Beck S."/>
            <person name="Rogers J."/>
            <person name="Bentley D.R."/>
        </authorList>
    </citation>
    <scope>NUCLEOTIDE SEQUENCE [LARGE SCALE GENOMIC DNA]</scope>
</reference>
<reference key="5">
    <citation type="journal article" date="2004" name="Protein Sci.">
        <title>Signal peptide prediction based on analysis of experimentally verified cleavage sites.</title>
        <authorList>
            <person name="Zhang Z."/>
            <person name="Henzel W.J."/>
        </authorList>
    </citation>
    <scope>PROTEIN SEQUENCE OF 21-35 (ISOFORM 1)</scope>
</reference>
<evidence type="ECO:0000250" key="1"/>
<evidence type="ECO:0000269" key="2">
    <source>
    </source>
</evidence>
<evidence type="ECO:0000303" key="3">
    <source>
    </source>
</evidence>
<evidence type="ECO:0000305" key="4"/>
<organism>
    <name type="scientific">Homo sapiens</name>
    <name type="common">Human</name>
    <dbReference type="NCBI Taxonomy" id="9606"/>
    <lineage>
        <taxon>Eukaryota</taxon>
        <taxon>Metazoa</taxon>
        <taxon>Chordata</taxon>
        <taxon>Craniata</taxon>
        <taxon>Vertebrata</taxon>
        <taxon>Euteleostomi</taxon>
        <taxon>Mammalia</taxon>
        <taxon>Eutheria</taxon>
        <taxon>Euarchontoglires</taxon>
        <taxon>Primates</taxon>
        <taxon>Haplorrhini</taxon>
        <taxon>Catarrhini</taxon>
        <taxon>Hominidae</taxon>
        <taxon>Homo</taxon>
    </lineage>
</organism>
<comment type="function">
    <text>Highly potent vasoconstrictor.</text>
</comment>
<comment type="subcellular location">
    <subcellularLocation>
        <location>Secreted</location>
    </subcellularLocation>
</comment>
<comment type="alternative products">
    <event type="alternative splicing"/>
    <isoform>
        <id>O95399-1</id>
        <name>1</name>
        <sequence type="displayed"/>
    </isoform>
    <isoform>
        <id>O95399-2</id>
        <name>2</name>
        <sequence type="described" ref="VSP_013638"/>
    </isoform>
</comment>
<comment type="tissue specificity">
    <text>Brain specific.</text>
</comment>
<comment type="similarity">
    <text evidence="4">Belongs to the urotensin-2 family.</text>
</comment>
<sequence>MYKLASCCLLFIGFLNPLLSLPLLDSREISFQLSAPHEDARLTPEELERASLLQILPEMLGAERGDILRKADSSTNIFNPRGNLRKFQDFSGQDPNILLSHLLARIWKPYKKRETPDCFWKYCV</sequence>